<feature type="chain" id="PRO_0000365970" description="Eukaryotic translation initiation factor 3 subunit E">
    <location>
        <begin position="1"/>
        <end position="435"/>
    </location>
</feature>
<feature type="domain" description="PCI" evidence="3">
    <location>
        <begin position="219"/>
        <end position="392"/>
    </location>
</feature>
<gene>
    <name type="primary">eIF3-S6</name>
    <name type="synonym">Int6</name>
    <name type="ORF">GD12442</name>
</gene>
<evidence type="ECO:0000250" key="1">
    <source>
        <dbReference type="UniProtKB" id="O77410"/>
    </source>
</evidence>
<evidence type="ECO:0000255" key="2">
    <source>
        <dbReference type="HAMAP-Rule" id="MF_03004"/>
    </source>
</evidence>
<evidence type="ECO:0000255" key="3">
    <source>
        <dbReference type="PROSITE-ProRule" id="PRU01185"/>
    </source>
</evidence>
<proteinExistence type="inferred from homology"/>
<dbReference type="EMBL" id="CM000363">
    <property type="protein sequence ID" value="EDX10779.1"/>
    <property type="molecule type" value="Genomic_DNA"/>
</dbReference>
<dbReference type="SMR" id="B4QMY7"/>
<dbReference type="STRING" id="7240.B4QMY7"/>
<dbReference type="EnsemblMetazoa" id="FBtr0212352">
    <property type="protein sequence ID" value="FBpp0210844"/>
    <property type="gene ID" value="FBgn0184174"/>
</dbReference>
<dbReference type="EnsemblMetazoa" id="XM_002085158.4">
    <property type="protein sequence ID" value="XP_002085194.1"/>
    <property type="gene ID" value="LOC6738385"/>
</dbReference>
<dbReference type="GeneID" id="6738385"/>
<dbReference type="CTD" id="3646"/>
<dbReference type="HOGENOM" id="CLU_031132_0_0_1"/>
<dbReference type="OMA" id="NCPWILR"/>
<dbReference type="OrthoDB" id="417252at2759"/>
<dbReference type="PhylomeDB" id="B4QMY7"/>
<dbReference type="Proteomes" id="UP000000304">
    <property type="component" value="Chromosome 3L"/>
</dbReference>
<dbReference type="Bgee" id="FBgn0184174">
    <property type="expression patterns" value="Expressed in embryo and 3 other cell types or tissues"/>
</dbReference>
<dbReference type="GO" id="GO:0016282">
    <property type="term" value="C:eukaryotic 43S preinitiation complex"/>
    <property type="evidence" value="ECO:0007669"/>
    <property type="project" value="UniProtKB-UniRule"/>
</dbReference>
<dbReference type="GO" id="GO:0033290">
    <property type="term" value="C:eukaryotic 48S preinitiation complex"/>
    <property type="evidence" value="ECO:0007669"/>
    <property type="project" value="UniProtKB-UniRule"/>
</dbReference>
<dbReference type="GO" id="GO:0071540">
    <property type="term" value="C:eukaryotic translation initiation factor 3 complex, eIF3e"/>
    <property type="evidence" value="ECO:0007669"/>
    <property type="project" value="UniProtKB-UniRule"/>
</dbReference>
<dbReference type="GO" id="GO:0043231">
    <property type="term" value="C:intracellular membrane-bounded organelle"/>
    <property type="evidence" value="ECO:0007669"/>
    <property type="project" value="EnsemblMetazoa"/>
</dbReference>
<dbReference type="GO" id="GO:0003743">
    <property type="term" value="F:translation initiation factor activity"/>
    <property type="evidence" value="ECO:0007669"/>
    <property type="project" value="UniProtKB-UniRule"/>
</dbReference>
<dbReference type="GO" id="GO:0001732">
    <property type="term" value="P:formation of cytoplasmic translation initiation complex"/>
    <property type="evidence" value="ECO:0007669"/>
    <property type="project" value="UniProtKB-UniRule"/>
</dbReference>
<dbReference type="CDD" id="cd21378">
    <property type="entry name" value="eIF3E"/>
    <property type="match status" value="1"/>
</dbReference>
<dbReference type="HAMAP" id="MF_03004">
    <property type="entry name" value="eIF3e"/>
    <property type="match status" value="1"/>
</dbReference>
<dbReference type="InterPro" id="IPR016650">
    <property type="entry name" value="eIF3e"/>
</dbReference>
<dbReference type="InterPro" id="IPR019010">
    <property type="entry name" value="eIF3e_N"/>
</dbReference>
<dbReference type="InterPro" id="IPR000717">
    <property type="entry name" value="PCI_dom"/>
</dbReference>
<dbReference type="InterPro" id="IPR036390">
    <property type="entry name" value="WH_DNA-bd_sf"/>
</dbReference>
<dbReference type="PANTHER" id="PTHR10317">
    <property type="entry name" value="EUKARYOTIC TRANSLATION INITIATION FACTOR 3 SUBUNIT E"/>
    <property type="match status" value="1"/>
</dbReference>
<dbReference type="Pfam" id="PF09440">
    <property type="entry name" value="eIF3_N"/>
    <property type="match status" value="1"/>
</dbReference>
<dbReference type="Pfam" id="PF01399">
    <property type="entry name" value="PCI"/>
    <property type="match status" value="1"/>
</dbReference>
<dbReference type="PIRSF" id="PIRSF016255">
    <property type="entry name" value="eIF3e_su6"/>
    <property type="match status" value="1"/>
</dbReference>
<dbReference type="SMART" id="SM01186">
    <property type="entry name" value="eIF3_N"/>
    <property type="match status" value="1"/>
</dbReference>
<dbReference type="SMART" id="SM00088">
    <property type="entry name" value="PINT"/>
    <property type="match status" value="1"/>
</dbReference>
<dbReference type="SUPFAM" id="SSF46785">
    <property type="entry name" value="Winged helix' DNA-binding domain"/>
    <property type="match status" value="1"/>
</dbReference>
<dbReference type="PROSITE" id="PS50250">
    <property type="entry name" value="PCI"/>
    <property type="match status" value="1"/>
</dbReference>
<keyword id="KW-0963">Cytoplasm</keyword>
<keyword id="KW-0396">Initiation factor</keyword>
<keyword id="KW-0648">Protein biosynthesis</keyword>
<keyword id="KW-1185">Reference proteome</keyword>
<protein>
    <recommendedName>
        <fullName evidence="2">Eukaryotic translation initiation factor 3 subunit E</fullName>
        <shortName evidence="2">eIF3e</shortName>
    </recommendedName>
    <alternativeName>
        <fullName evidence="2">Eukaryotic translation initiation factor 3 subunit 6</fullName>
    </alternativeName>
</protein>
<sequence>MANFDLTRINCQFLDRHLTFPLLEFLCGKEIYNQQELLEYILETVNKTNMIDYTMDTRKRLNLSQEMPEELVQRKAEVLATLKQLQNEVAPIMKATDILKNGESMKDSKTFVNALQKDYNFKVEHLESAYKLAKYLYECGNYQESTSYLYFCLIVMSPNDKNYLNVLWGKLAAEILTLNWNTALEDLTRLRDYIDNANFSTIQALQQRTWLIHWSVLVFFNHPKGRDLIIEMFLYKPLYLNAIQTMCPHIMRYLATAVVINRTRRNALKDLIKVIQQESYTYRDPITEFLECLYVNFDFEGARLKLHECQTVILNDFFIVACLNEFVEDARLMIFETFCRIHQCITISMLADKLNMKPNEAECWIVNLIRNARLNAKIDSKLGHVVMGTQPLSPYQQLVEKIDSLSMRSEHLAGLIERKSKQKQNQESADSWKYY</sequence>
<reference key="1">
    <citation type="journal article" date="2007" name="Nature">
        <title>Evolution of genes and genomes on the Drosophila phylogeny.</title>
        <authorList>
            <consortium name="Drosophila 12 genomes consortium"/>
        </authorList>
    </citation>
    <scope>NUCLEOTIDE SEQUENCE [LARGE SCALE GENOMIC DNA]</scope>
</reference>
<accession>B4QMY7</accession>
<organism>
    <name type="scientific">Drosophila simulans</name>
    <name type="common">Fruit fly</name>
    <dbReference type="NCBI Taxonomy" id="7240"/>
    <lineage>
        <taxon>Eukaryota</taxon>
        <taxon>Metazoa</taxon>
        <taxon>Ecdysozoa</taxon>
        <taxon>Arthropoda</taxon>
        <taxon>Hexapoda</taxon>
        <taxon>Insecta</taxon>
        <taxon>Pterygota</taxon>
        <taxon>Neoptera</taxon>
        <taxon>Endopterygota</taxon>
        <taxon>Diptera</taxon>
        <taxon>Brachycera</taxon>
        <taxon>Muscomorpha</taxon>
        <taxon>Ephydroidea</taxon>
        <taxon>Drosophilidae</taxon>
        <taxon>Drosophila</taxon>
        <taxon>Sophophora</taxon>
    </lineage>
</organism>
<name>EIF3E_DROSI</name>
<comment type="function">
    <text evidence="2">Component of the eukaryotic translation initiation factor 3 (eIF-3) complex, which is involved in protein synthesis of a specialized repertoire of mRNAs and, together with other initiation factors, stimulates binding of mRNA and methionyl-tRNAi to the 40S ribosome. The eIF-3 complex specifically targets and initiates translation of a subset of mRNAs involved in cell proliferation.</text>
</comment>
<comment type="subunit">
    <text evidence="1 2">Component of the eukaryotic translation initiation factor 3 (eIF-3) complex. The eIF-3 complex interacts with pix. Interacts with mxt (By similarity).</text>
</comment>
<comment type="subcellular location">
    <subcellularLocation>
        <location evidence="2">Cytoplasm</location>
    </subcellularLocation>
</comment>
<comment type="similarity">
    <text evidence="2">Belongs to the eIF-3 subunit E family.</text>
</comment>